<name>LIP_RHIOR</name>
<dbReference type="EC" id="3.1.1.3" evidence="7"/>
<dbReference type="EMBL" id="M38352">
    <property type="protein sequence ID" value="AAA33878.1"/>
    <property type="molecule type" value="mRNA"/>
</dbReference>
<dbReference type="EMBL" id="AF229435">
    <property type="protein sequence ID" value="AAF32408.1"/>
    <property type="molecule type" value="Genomic_DNA"/>
</dbReference>
<dbReference type="EMBL" id="AY513724">
    <property type="protein sequence ID" value="AAS84458.1"/>
    <property type="molecule type" value="Genomic_DNA"/>
</dbReference>
<dbReference type="PIR" id="JQ1390">
    <property type="entry name" value="JQ1390"/>
</dbReference>
<dbReference type="PIR" id="S32492">
    <property type="entry name" value="S32492"/>
</dbReference>
<dbReference type="PDB" id="1TIC">
    <property type="method" value="X-ray"/>
    <property type="resolution" value="2.60 A"/>
    <property type="chains" value="A/B=124-392"/>
</dbReference>
<dbReference type="PDBsum" id="1TIC"/>
<dbReference type="SMR" id="P61872"/>
<dbReference type="Allergome" id="7694">
    <property type="allergen name" value="Rhi o Lipase"/>
</dbReference>
<dbReference type="ESTHER" id="rhidl-lipas">
    <property type="family name" value="Lipase_3"/>
</dbReference>
<dbReference type="OMA" id="CTRCECT"/>
<dbReference type="OrthoDB" id="438440at2759"/>
<dbReference type="PhylomeDB" id="P61872"/>
<dbReference type="BRENDA" id="3.1.1.3">
    <property type="organism ID" value="5365"/>
</dbReference>
<dbReference type="SABIO-RK" id="P61872"/>
<dbReference type="EvolutionaryTrace" id="P61872"/>
<dbReference type="GO" id="GO:0005576">
    <property type="term" value="C:extracellular region"/>
    <property type="evidence" value="ECO:0007669"/>
    <property type="project" value="UniProtKB-SubCell"/>
</dbReference>
<dbReference type="GO" id="GO:0046872">
    <property type="term" value="F:metal ion binding"/>
    <property type="evidence" value="ECO:0007669"/>
    <property type="project" value="UniProtKB-KW"/>
</dbReference>
<dbReference type="GO" id="GO:0004806">
    <property type="term" value="F:triacylglycerol lipase activity"/>
    <property type="evidence" value="ECO:0007669"/>
    <property type="project" value="UniProtKB-EC"/>
</dbReference>
<dbReference type="GO" id="GO:0016042">
    <property type="term" value="P:lipid catabolic process"/>
    <property type="evidence" value="ECO:0007669"/>
    <property type="project" value="UniProtKB-KW"/>
</dbReference>
<dbReference type="CDD" id="cd00519">
    <property type="entry name" value="Lipase_3"/>
    <property type="match status" value="1"/>
</dbReference>
<dbReference type="Gene3D" id="3.40.50.1820">
    <property type="entry name" value="alpha/beta hydrolase"/>
    <property type="match status" value="1"/>
</dbReference>
<dbReference type="InterPro" id="IPR029058">
    <property type="entry name" value="AB_hydrolase_fold"/>
</dbReference>
<dbReference type="InterPro" id="IPR002921">
    <property type="entry name" value="Fungal_lipase-type"/>
</dbReference>
<dbReference type="InterPro" id="IPR051218">
    <property type="entry name" value="Sec_MonoDiacylglyc_Lipase"/>
</dbReference>
<dbReference type="PANTHER" id="PTHR45856">
    <property type="entry name" value="ALPHA/BETA-HYDROLASES SUPERFAMILY PROTEIN"/>
    <property type="match status" value="1"/>
</dbReference>
<dbReference type="PANTHER" id="PTHR45856:SF24">
    <property type="entry name" value="FUNGAL LIPASE-LIKE DOMAIN-CONTAINING PROTEIN"/>
    <property type="match status" value="1"/>
</dbReference>
<dbReference type="Pfam" id="PF01764">
    <property type="entry name" value="Lipase_3"/>
    <property type="match status" value="1"/>
</dbReference>
<dbReference type="SUPFAM" id="SSF53474">
    <property type="entry name" value="alpha/beta-Hydrolases"/>
    <property type="match status" value="1"/>
</dbReference>
<dbReference type="PROSITE" id="PS00120">
    <property type="entry name" value="LIPASE_SER"/>
    <property type="match status" value="1"/>
</dbReference>
<comment type="function">
    <text evidence="4 6">Hydrolyzes ester bonds of triglycerides as well as of their derived partial glycerides with a strong 1,3-positional specificity.</text>
</comment>
<comment type="catalytic activity">
    <reaction evidence="7 9">
        <text>a triacylglycerol + H2O = a diacylglycerol + a fatty acid + H(+)</text>
        <dbReference type="Rhea" id="RHEA:12044"/>
        <dbReference type="ChEBI" id="CHEBI:15377"/>
        <dbReference type="ChEBI" id="CHEBI:15378"/>
        <dbReference type="ChEBI" id="CHEBI:17855"/>
        <dbReference type="ChEBI" id="CHEBI:18035"/>
        <dbReference type="ChEBI" id="CHEBI:28868"/>
        <dbReference type="EC" id="3.1.1.3"/>
    </reaction>
</comment>
<comment type="activity regulation">
    <text evidence="4">Lipase activity is maximal at a lipid-water interface (interfacial activation), probably by an induced conformational change that results in an increased accessibility of the active site to the substrate.</text>
</comment>
<comment type="biophysicochemical properties">
    <kinetics>
        <KM evidence="7">4.4 mM for triolein</KM>
    </kinetics>
    <phDependence>
        <text evidence="9">Optimum pH is 8.5.</text>
    </phDependence>
    <temperatureDependence>
        <text evidence="9">Stable up to 30 degrees Celsius.</text>
    </temperatureDependence>
</comment>
<comment type="subcellular location">
    <subcellularLocation>
        <location evidence="6">Secreted</location>
        <location evidence="6">Extracellular space</location>
    </subcellularLocation>
</comment>
<comment type="miscellaneous">
    <text>Limited proteolysis produces a smaller peptide starting at residue Ser-124, that has altered substrate specificity and biophysicochemical properties.</text>
</comment>
<comment type="similarity">
    <text evidence="10">Belongs to the AB hydrolase superfamily. Lipase family.</text>
</comment>
<reference key="1">
    <citation type="journal article" date="1991" name="Gene">
        <title>Cloning, expression and characterization of a cDNA encoding a lipase from Rhizopus delemar.</title>
        <authorList>
            <person name="Haas M.J."/>
            <person name="Berka T.R."/>
        </authorList>
    </citation>
    <scope>NUCLEOTIDE SEQUENCE [MRNA]</scope>
    <source>
        <strain>ATCC 34612</strain>
    </source>
</reference>
<reference key="2">
    <citation type="journal article" date="1998" name="Biochim. Biophys. Acta">
        <title>Cloning, expression, characterization and role of the leader sequence of a lipase from Rhizopus oryzae.</title>
        <authorList>
            <person name="Beer H.D."/>
            <person name="McCarthy J.E.G."/>
            <person name="Bornscheuer U.T."/>
            <person name="Schmid R.D."/>
        </authorList>
    </citation>
    <scope>NUCLEOTIDE SEQUENCE [GENOMIC DNA]</scope>
    <scope>PROTEIN SEQUENCE OF 124-128</scope>
    <scope>CATALYTIC ACTIVITY</scope>
    <scope>BIOPHYSICOCHEMICAL PROPERTIES</scope>
    <source>
        <strain>ATCC 4858 / DSM 853 / CBS 327.47</strain>
    </source>
</reference>
<reference key="3">
    <citation type="journal article" date="1993" name="Biol. Chem. Hoppe-Seyler">
        <title>Molecular characterization of an extracellular acid-resistant lipase produced by Rhizopus javanicus.</title>
        <authorList>
            <person name="Uyttenbroeck W."/>
            <person name="Hendriks D."/>
            <person name="Vriend G."/>
            <person name="de Baere I."/>
            <person name="Moens L."/>
            <person name="Scharpe S."/>
        </authorList>
    </citation>
    <scope>PROTEIN SEQUENCE OF 96-123; 126-134; 173-209; 280-321; 327-364 AND 366-390</scope>
    <scope>FUNCTION</scope>
    <scope>SUBCELLULAR LOCATION</scope>
</reference>
<reference key="4">
    <citation type="journal article" date="2005" name="FEBS Lett.">
        <title>N-terminal peptide of Rhizopus oryzae lipase is important for its catalytic properties.</title>
        <authorList>
            <person name="Sayari A."/>
            <person name="Frikha F."/>
            <person name="Miled N."/>
            <person name="Mtibaa H."/>
            <person name="Ben-Ali Y."/>
            <person name="Verger R."/>
            <person name="Gargouri Y."/>
        </authorList>
    </citation>
    <scope>NUCLEOTIDE SEQUENCE [GENOMIC DNA] OF 96-392</scope>
    <scope>PROTEIN SEQUENCE OF 124-144</scope>
</reference>
<reference key="5">
    <citation type="journal article" date="2001" name="Biochimie">
        <title>Kinetic studies of Rhizopus oryzae lipase using monomolecular film technique.</title>
        <authorList>
            <person name="Ben-Salah A."/>
            <person name="Sayari A."/>
            <person name="Verger R."/>
            <person name="Gargouri Y."/>
        </authorList>
    </citation>
    <scope>PROTEIN SEQUENCE OF 96-115</scope>
    <scope>FUNCTION</scope>
    <scope>ACTIVITY REGULATION</scope>
</reference>
<reference key="6">
    <citation type="journal article" date="1996" name="Biochem. J.">
        <title>The folding and activity of the extracellular lipase of Rhizopus oryzae are modulated by a prosequence.</title>
        <authorList>
            <person name="Beer H.D."/>
            <person name="Wohlfahrt G."/>
            <person name="Schmid R.D."/>
            <person name="McCarthy J.E.G."/>
        </authorList>
    </citation>
    <scope>MUTAGENESIS OF CYS-56</scope>
</reference>
<reference key="7">
    <citation type="journal article" date="1996" name="Protein Eng.">
        <title>Analysis of the catalytic mechanism of a fungal lipase using computer-aided design and structural mutants.</title>
        <authorList>
            <person name="Beer H.D."/>
            <person name="Wohlfahrt G."/>
            <person name="McCarthy J.E.G."/>
            <person name="Schomburg D."/>
            <person name="Schmid R.D."/>
        </authorList>
    </citation>
    <scope>CATALYTIC ACTIVITY</scope>
    <scope>BIOPHYSICOCHEMICAL PROPERTIES</scope>
    <scope>MUTAGENESIS OF TYR-151; THR-206; ALA-212; ASP-215; HIS-267; ASP-327 AND GLU-388</scope>
</reference>
<reference key="8">
    <citation type="journal article" date="1994" name="J. Lipid Res.">
        <title>Conformational lability of lipases observed in the absence of an oil-water interface: crystallographic studies of enzymes from the fungi Humicola lanuginosa and Rhizopus delemar.</title>
        <authorList>
            <person name="Derewenda U."/>
            <person name="Swenson L."/>
            <person name="Wei Y."/>
            <person name="Green R."/>
            <person name="Kobos P.M."/>
            <person name="Joerger R."/>
            <person name="Haas M.J."/>
            <person name="Derewenda Z.S."/>
        </authorList>
    </citation>
    <scope>X-RAY CRYSTALLOGRAPHY (2.6 ANGSTROMS) OF 124-392</scope>
</reference>
<evidence type="ECO:0000250" key="1"/>
<evidence type="ECO:0000255" key="2"/>
<evidence type="ECO:0000256" key="3">
    <source>
        <dbReference type="SAM" id="MobiDB-lite"/>
    </source>
</evidence>
<evidence type="ECO:0000269" key="4">
    <source>
    </source>
</evidence>
<evidence type="ECO:0000269" key="5">
    <source>
    </source>
</evidence>
<evidence type="ECO:0000269" key="6">
    <source>
    </source>
</evidence>
<evidence type="ECO:0000269" key="7">
    <source>
    </source>
</evidence>
<evidence type="ECO:0000269" key="8">
    <source>
    </source>
</evidence>
<evidence type="ECO:0000269" key="9">
    <source>
    </source>
</evidence>
<evidence type="ECO:0000305" key="10"/>
<evidence type="ECO:0000305" key="11">
    <source>
    </source>
</evidence>
<feature type="signal peptide" evidence="2">
    <location>
        <begin position="1"/>
        <end position="26"/>
    </location>
</feature>
<feature type="propeptide" id="PRO_0000017735" evidence="4">
    <location>
        <begin position="27"/>
        <end position="95"/>
    </location>
</feature>
<feature type="chain" id="PRO_0000017736" description="Lipase">
    <location>
        <begin position="96"/>
        <end position="392"/>
    </location>
</feature>
<feature type="region of interest" description="Disordered" evidence="3">
    <location>
        <begin position="50"/>
        <end position="69"/>
    </location>
</feature>
<feature type="active site" description="Nucleophile" evidence="11">
    <location>
        <position position="268"/>
    </location>
</feature>
<feature type="active site" description="Charge relay system" evidence="5">
    <location>
        <position position="327"/>
    </location>
</feature>
<feature type="active site" description="Charge relay system" evidence="11">
    <location>
        <position position="380"/>
    </location>
</feature>
<feature type="binding site" evidence="1">
    <location>
        <position position="379"/>
    </location>
    <ligand>
        <name>Ca(2+)</name>
        <dbReference type="ChEBI" id="CHEBI:29108"/>
    </ligand>
</feature>
<feature type="disulfide bond">
    <location>
        <begin position="152"/>
        <end position="391"/>
    </location>
</feature>
<feature type="disulfide bond">
    <location>
        <begin position="163"/>
        <end position="166"/>
    </location>
</feature>
<feature type="disulfide bond">
    <location>
        <begin position="358"/>
        <end position="367"/>
    </location>
</feature>
<feature type="mutagenesis site" description="Slows folding of the peptide to the mature protein." evidence="8">
    <original>C</original>
    <variation>S</variation>
    <location>
        <position position="56"/>
    </location>
</feature>
<feature type="mutagenesis site" description="Abolishes lipase activity." evidence="7">
    <original>Y</original>
    <variation>F</variation>
    <location>
        <position position="151"/>
    </location>
</feature>
<feature type="mutagenesis site" description="Abolishes lipase activity." evidence="7">
    <original>T</original>
    <variation>A</variation>
    <variation>V</variation>
    <location>
        <position position="206"/>
    </location>
</feature>
<feature type="mutagenesis site" description="Reduces lipase activity by 88%. Reduces lipase activity by 92%; when associated with W-212." evidence="7">
    <original>T</original>
    <variation>S</variation>
    <location>
        <position position="206"/>
    </location>
</feature>
<feature type="mutagenesis site" description="Reduces lipase activity by 44%. Reduces lipase activity by 92%; when associated with S-206." evidence="7">
    <original>A</original>
    <variation>W</variation>
    <location>
        <position position="212"/>
    </location>
</feature>
<feature type="mutagenesis site" description="Reduces lipase activity by 93%." evidence="7">
    <original>D</original>
    <variation>N</variation>
    <location>
        <position position="215"/>
    </location>
</feature>
<feature type="mutagenesis site" description="Abolishes lipase activity." evidence="7">
    <original>H</original>
    <variation>F</variation>
    <location>
        <position position="267"/>
    </location>
</feature>
<feature type="mutagenesis site" description="Reduces lipase activity by 98%." evidence="7">
    <original>H</original>
    <variation>S</variation>
    <location>
        <position position="267"/>
    </location>
</feature>
<feature type="mutagenesis site" description="Abolishes lipase activity." evidence="7">
    <original>D</original>
    <variation>A</variation>
    <location>
        <position position="327"/>
    </location>
</feature>
<feature type="mutagenesis site" description="Abolishes lipase activity." evidence="7">
    <original>E</original>
    <variation>D</variation>
    <location>
        <position position="388"/>
    </location>
</feature>
<feature type="sequence conflict" description="In Ref. 2; AAF32408." evidence="10" ref="2">
    <original>N</original>
    <variation>T</variation>
    <location>
        <position position="37"/>
    </location>
</feature>
<feature type="sequence conflict" description="In Ref. 2; AAF32408." evidence="10" ref="2">
    <original>A</original>
    <variation>S</variation>
    <location>
        <position position="46"/>
    </location>
</feature>
<feature type="sequence conflict" description="In Ref. 2; AAF32408." evidence="10" ref="2">
    <original>N</original>
    <variation>Y</variation>
    <location>
        <position position="74"/>
    </location>
</feature>
<feature type="sequence conflict" description="In Ref. 2; AAF32408 and 4; AAS84458." evidence="10" ref="2 4">
    <original>S</original>
    <variation>G</variation>
    <location>
        <position position="118"/>
    </location>
</feature>
<feature type="sequence conflict" description="In Ref. 2; AAF32408." evidence="10" ref="2">
    <original>H</original>
    <variation>N</variation>
    <location>
        <position position="257"/>
    </location>
</feature>
<feature type="sequence conflict" description="In Ref. 2; AAF32408." evidence="10" ref="2">
    <original>I</original>
    <variation>L</variation>
    <location>
        <position position="377"/>
    </location>
</feature>
<proteinExistence type="evidence at protein level"/>
<accession>P61872</accession>
<accession>P21811</accession>
<accession>Q12237</accession>
<accession>Q5J329</accession>
<accession>Q7M4U7</accession>
<accession>Q9P312</accession>
<sequence>MVSFISISQGVSLCLLVSSMMLGSSAVPVSGKSGSSNTAVSASDNAALPPLISSRCAPPSNKGSKSDLQAEPYNMQKNTEWYESHGGNLTSIGKRDDNLVGGMTLDLPSDAPPISLSSSTNSASDGGKVVAATTAQIQEFTKYAGIAATAYCRSVVPGNKWDCVQCQKWVPDGKIITTFTSLLSDTNGYVLRSDKQKTIYLVFRGTNSFRSAITDIVFNFSDYKPVKGAKVHAGFLSSYEQVVNDYFPVVQEQLTAHPTYKVIVTGHSLGGAQALLAGMDLYQREPRLSPKNLSIFTVGGPRVGNPTFAYYVESTGIPFQRTVHKRDIVPHVPPQSFGFLHPGVESWIKSGTSNVQICTSEIETKDCSNSIVPFTSILDHLSYFDINEGSCL</sequence>
<organism>
    <name type="scientific">Rhizopus oryzae</name>
    <name type="common">Mucormycosis agent</name>
    <name type="synonym">Rhizopus arrhizus var. delemar</name>
    <dbReference type="NCBI Taxonomy" id="64495"/>
    <lineage>
        <taxon>Eukaryota</taxon>
        <taxon>Fungi</taxon>
        <taxon>Fungi incertae sedis</taxon>
        <taxon>Mucoromycota</taxon>
        <taxon>Mucoromycotina</taxon>
        <taxon>Mucoromycetes</taxon>
        <taxon>Mucorales</taxon>
        <taxon>Mucorineae</taxon>
        <taxon>Rhizopodaceae</taxon>
        <taxon>Rhizopus</taxon>
    </lineage>
</organism>
<protein>
    <recommendedName>
        <fullName>Lipase</fullName>
        <ecNumber evidence="7">3.1.1.3</ecNumber>
    </recommendedName>
    <alternativeName>
        <fullName>RDL</fullName>
    </alternativeName>
    <alternativeName>
        <fullName>Triacylglycerol lipase</fullName>
        <shortName>ROL</shortName>
    </alternativeName>
</protein>
<keyword id="KW-0002">3D-structure</keyword>
<keyword id="KW-0106">Calcium</keyword>
<keyword id="KW-0165">Cleavage on pair of basic residues</keyword>
<keyword id="KW-0903">Direct protein sequencing</keyword>
<keyword id="KW-1015">Disulfide bond</keyword>
<keyword id="KW-0378">Hydrolase</keyword>
<keyword id="KW-0442">Lipid degradation</keyword>
<keyword id="KW-0443">Lipid metabolism</keyword>
<keyword id="KW-0479">Metal-binding</keyword>
<keyword id="KW-0964">Secreted</keyword>
<keyword id="KW-0732">Signal</keyword>